<dbReference type="EC" id="2.2.1.2" evidence="2"/>
<dbReference type="EMBL" id="CP001600">
    <property type="protein sequence ID" value="ACR67887.1"/>
    <property type="molecule type" value="Genomic_DNA"/>
</dbReference>
<dbReference type="RefSeq" id="WP_015870081.1">
    <property type="nucleotide sequence ID" value="NZ_CP169062.1"/>
</dbReference>
<dbReference type="SMR" id="C5B7L0"/>
<dbReference type="STRING" id="67780.B6E78_13990"/>
<dbReference type="GeneID" id="69537733"/>
<dbReference type="KEGG" id="eic:NT01EI_0665"/>
<dbReference type="PATRIC" id="fig|634503.3.peg.599"/>
<dbReference type="HOGENOM" id="CLU_047470_0_1_6"/>
<dbReference type="OrthoDB" id="9809101at2"/>
<dbReference type="UniPathway" id="UPA00115">
    <property type="reaction ID" value="UER00414"/>
</dbReference>
<dbReference type="Proteomes" id="UP000001485">
    <property type="component" value="Chromosome"/>
</dbReference>
<dbReference type="GO" id="GO:0005829">
    <property type="term" value="C:cytosol"/>
    <property type="evidence" value="ECO:0007669"/>
    <property type="project" value="TreeGrafter"/>
</dbReference>
<dbReference type="GO" id="GO:0004801">
    <property type="term" value="F:transaldolase activity"/>
    <property type="evidence" value="ECO:0000250"/>
    <property type="project" value="UniProtKB"/>
</dbReference>
<dbReference type="GO" id="GO:0005975">
    <property type="term" value="P:carbohydrate metabolic process"/>
    <property type="evidence" value="ECO:0007669"/>
    <property type="project" value="InterPro"/>
</dbReference>
<dbReference type="GO" id="GO:0006098">
    <property type="term" value="P:pentose-phosphate shunt"/>
    <property type="evidence" value="ECO:0007669"/>
    <property type="project" value="UniProtKB-UniRule"/>
</dbReference>
<dbReference type="CDD" id="cd00957">
    <property type="entry name" value="Transaldolase_TalAB"/>
    <property type="match status" value="1"/>
</dbReference>
<dbReference type="FunFam" id="3.20.20.70:FF:000002">
    <property type="entry name" value="Transaldolase"/>
    <property type="match status" value="1"/>
</dbReference>
<dbReference type="Gene3D" id="3.20.20.70">
    <property type="entry name" value="Aldolase class I"/>
    <property type="match status" value="1"/>
</dbReference>
<dbReference type="HAMAP" id="MF_00492">
    <property type="entry name" value="Transaldolase_1"/>
    <property type="match status" value="1"/>
</dbReference>
<dbReference type="InterPro" id="IPR013785">
    <property type="entry name" value="Aldolase_TIM"/>
</dbReference>
<dbReference type="InterPro" id="IPR001585">
    <property type="entry name" value="TAL/FSA"/>
</dbReference>
<dbReference type="InterPro" id="IPR004730">
    <property type="entry name" value="Transaldolase_1"/>
</dbReference>
<dbReference type="InterPro" id="IPR018225">
    <property type="entry name" value="Transaldolase_AS"/>
</dbReference>
<dbReference type="NCBIfam" id="NF009001">
    <property type="entry name" value="PRK12346.1"/>
    <property type="match status" value="1"/>
</dbReference>
<dbReference type="NCBIfam" id="TIGR00874">
    <property type="entry name" value="talAB"/>
    <property type="match status" value="1"/>
</dbReference>
<dbReference type="PANTHER" id="PTHR10683">
    <property type="entry name" value="TRANSALDOLASE"/>
    <property type="match status" value="1"/>
</dbReference>
<dbReference type="PANTHER" id="PTHR10683:SF18">
    <property type="entry name" value="TRANSALDOLASE"/>
    <property type="match status" value="1"/>
</dbReference>
<dbReference type="Pfam" id="PF00923">
    <property type="entry name" value="TAL_FSA"/>
    <property type="match status" value="1"/>
</dbReference>
<dbReference type="SUPFAM" id="SSF51569">
    <property type="entry name" value="Aldolase"/>
    <property type="match status" value="1"/>
</dbReference>
<dbReference type="PROSITE" id="PS01054">
    <property type="entry name" value="TRANSALDOLASE_1"/>
    <property type="match status" value="1"/>
</dbReference>
<dbReference type="PROSITE" id="PS00958">
    <property type="entry name" value="TRANSALDOLASE_2"/>
    <property type="match status" value="1"/>
</dbReference>
<proteinExistence type="inferred from homology"/>
<evidence type="ECO:0000250" key="1"/>
<evidence type="ECO:0000255" key="2">
    <source>
        <dbReference type="HAMAP-Rule" id="MF_00492"/>
    </source>
</evidence>
<protein>
    <recommendedName>
        <fullName evidence="2">Transaldolase</fullName>
        <ecNumber evidence="2">2.2.1.2</ecNumber>
    </recommendedName>
</protein>
<feature type="chain" id="PRO_1000206463" description="Transaldolase">
    <location>
        <begin position="1"/>
        <end position="317"/>
    </location>
</feature>
<feature type="active site" description="Schiff-base intermediate with substrate" evidence="2">
    <location>
        <position position="132"/>
    </location>
</feature>
<sequence>MTDKLTSLRQLTTVVADTGDIAAMKQYQPQDATTNPSLILNAAQIPEYRKLIDDAIAWARAQSGDRAQQIVDASDKLAVNIGLEILKLIPGRISTEVDARLSYDTEASVAKAKRLIKLYNDAGISNDRILIKLASTWQGIRAAERLEKEGINCNLTLLFSFAQARACAEAGVFLISPFVGRILDWHKANGGKSEFAPAEDPGVISVTEIYNYYKQHGYETVVMGASFRNVGEILELAGCDRLTISPPLLKELSESTGNVERKLADQGEIKARPARMSEAEFYWQHNQDPMAVEKLADGIRKFAVDQGKLESMIGALL</sequence>
<reference key="1">
    <citation type="submission" date="2009-03" db="EMBL/GenBank/DDBJ databases">
        <title>Complete genome sequence of Edwardsiella ictaluri 93-146.</title>
        <authorList>
            <person name="Williams M.L."/>
            <person name="Gillaspy A.F."/>
            <person name="Dyer D.W."/>
            <person name="Thune R.L."/>
            <person name="Waldbieser G.C."/>
            <person name="Schuster S.C."/>
            <person name="Gipson J."/>
            <person name="Zaitshik J."/>
            <person name="Landry C."/>
            <person name="Lawrence M.L."/>
        </authorList>
    </citation>
    <scope>NUCLEOTIDE SEQUENCE [LARGE SCALE GENOMIC DNA]</scope>
    <source>
        <strain>93-146</strain>
    </source>
</reference>
<keyword id="KW-0963">Cytoplasm</keyword>
<keyword id="KW-0570">Pentose shunt</keyword>
<keyword id="KW-0704">Schiff base</keyword>
<keyword id="KW-0808">Transferase</keyword>
<organism>
    <name type="scientific">Edwardsiella ictaluri (strain 93-146)</name>
    <dbReference type="NCBI Taxonomy" id="634503"/>
    <lineage>
        <taxon>Bacteria</taxon>
        <taxon>Pseudomonadati</taxon>
        <taxon>Pseudomonadota</taxon>
        <taxon>Gammaproteobacteria</taxon>
        <taxon>Enterobacterales</taxon>
        <taxon>Hafniaceae</taxon>
        <taxon>Edwardsiella</taxon>
    </lineage>
</organism>
<comment type="function">
    <text evidence="2">Transaldolase is important for the balance of metabolites in the pentose-phosphate pathway.</text>
</comment>
<comment type="catalytic activity">
    <reaction evidence="2">
        <text>D-sedoheptulose 7-phosphate + D-glyceraldehyde 3-phosphate = D-erythrose 4-phosphate + beta-D-fructose 6-phosphate</text>
        <dbReference type="Rhea" id="RHEA:17053"/>
        <dbReference type="ChEBI" id="CHEBI:16897"/>
        <dbReference type="ChEBI" id="CHEBI:57483"/>
        <dbReference type="ChEBI" id="CHEBI:57634"/>
        <dbReference type="ChEBI" id="CHEBI:59776"/>
        <dbReference type="EC" id="2.2.1.2"/>
    </reaction>
</comment>
<comment type="pathway">
    <text evidence="2">Carbohydrate degradation; pentose phosphate pathway; D-glyceraldehyde 3-phosphate and beta-D-fructose 6-phosphate from D-ribose 5-phosphate and D-xylulose 5-phosphate (non-oxidative stage): step 2/3.</text>
</comment>
<comment type="subunit">
    <text evidence="1">Homodimer.</text>
</comment>
<comment type="subcellular location">
    <subcellularLocation>
        <location evidence="2">Cytoplasm</location>
    </subcellularLocation>
</comment>
<comment type="similarity">
    <text evidence="2">Belongs to the transaldolase family. Type 1 subfamily.</text>
</comment>
<gene>
    <name evidence="2" type="primary">tal</name>
    <name type="ordered locus">NT01EI_0665</name>
</gene>
<name>TAL_EDWI9</name>
<accession>C5B7L0</accession>